<name>MPGS_AERPE</name>
<proteinExistence type="inferred from homology"/>
<sequence length="388" mass="42812">MMLSLPAKFEVFGAVRIYDVSRVLSLDGRPKSRPTNLVYVDRGELEDAAFRTVIVVPVKDEDLLTLENVLRSIPTESPVVVVSASTREPVDRFSNEVELARLISRSLQRDIAIVYQFDPAWSEALSGTPLESMVGASGRVRKGKGEGMLLGFIVAAALGADFVGYVDSDNYVPGSALEYSWIYYSALSRATSSYSMVRIVWPYKGKLAASDMYLRKRGRVSTITNGVLNYTLSIYKRIETDIIKTGNSGEQALTVKLGMEMNWGSGFAVETYQLVWMLENCYLGLQAGKCPIAPDYIEVRQVSPLNPHIHAERGDEHIAEMTAVSLGTIFHSSLASEEVKSRILDQLKSLGLAEEPPKPSTYRPAGTDPKKVFASFIAESSDSYYFAV</sequence>
<dbReference type="EC" id="2.4.1.217"/>
<dbReference type="EMBL" id="BA000002">
    <property type="protein sequence ID" value="BAA79872.2"/>
    <property type="molecule type" value="Genomic_DNA"/>
</dbReference>
<dbReference type="PIR" id="H72683">
    <property type="entry name" value="H72683"/>
</dbReference>
<dbReference type="SMR" id="Q9YDM5"/>
<dbReference type="STRING" id="272557.APE_0889.1"/>
<dbReference type="CAZy" id="GT55">
    <property type="family name" value="Glycosyltransferase Family 55"/>
</dbReference>
<dbReference type="EnsemblBacteria" id="BAA79872">
    <property type="protein sequence ID" value="BAA79872"/>
    <property type="gene ID" value="APE_0889.1"/>
</dbReference>
<dbReference type="KEGG" id="ape:APE_0889.1"/>
<dbReference type="eggNOG" id="arCOG04158">
    <property type="taxonomic scope" value="Archaea"/>
</dbReference>
<dbReference type="UniPathway" id="UPA00130">
    <property type="reaction ID" value="UER00192"/>
</dbReference>
<dbReference type="Proteomes" id="UP000002518">
    <property type="component" value="Chromosome"/>
</dbReference>
<dbReference type="GO" id="GO:0005737">
    <property type="term" value="C:cytoplasm"/>
    <property type="evidence" value="ECO:0007669"/>
    <property type="project" value="UniProtKB-SubCell"/>
</dbReference>
<dbReference type="GO" id="GO:0050504">
    <property type="term" value="F:mannosyl-3-phosphoglycerate synthase activity"/>
    <property type="evidence" value="ECO:0007669"/>
    <property type="project" value="UniProtKB-EC"/>
</dbReference>
<dbReference type="GO" id="GO:0051479">
    <property type="term" value="P:mannosylglycerate biosynthetic process"/>
    <property type="evidence" value="ECO:0007669"/>
    <property type="project" value="UniProtKB-UniPathway"/>
</dbReference>
<dbReference type="Gene3D" id="3.90.550.10">
    <property type="entry name" value="Spore Coat Polysaccharide Biosynthesis Protein SpsA, Chain A"/>
    <property type="match status" value="1"/>
</dbReference>
<dbReference type="InterPro" id="IPR029044">
    <property type="entry name" value="Nucleotide-diphossugar_trans"/>
</dbReference>
<dbReference type="InterPro" id="IPR012812">
    <property type="entry name" value="Osmo_MPG_synth"/>
</dbReference>
<dbReference type="NCBIfam" id="TIGR02460">
    <property type="entry name" value="osmo_MPGsynth"/>
    <property type="match status" value="1"/>
</dbReference>
<dbReference type="Pfam" id="PF09488">
    <property type="entry name" value="Osmo_MPGsynth"/>
    <property type="match status" value="1"/>
</dbReference>
<protein>
    <recommendedName>
        <fullName>Mannosyl-3-phosphoglycerate synthase</fullName>
        <shortName>MPG synthase</shortName>
        <shortName>MPGS</shortName>
        <ecNumber>2.4.1.217</ecNumber>
    </recommendedName>
</protein>
<keyword id="KW-0963">Cytoplasm</keyword>
<keyword id="KW-0328">Glycosyltransferase</keyword>
<keyword id="KW-1185">Reference proteome</keyword>
<keyword id="KW-0808">Transferase</keyword>
<evidence type="ECO:0000250" key="1"/>
<evidence type="ECO:0000305" key="2"/>
<feature type="chain" id="PRO_0000059284" description="Mannosyl-3-phosphoglycerate synthase">
    <location>
        <begin position="1"/>
        <end position="388"/>
    </location>
</feature>
<organism>
    <name type="scientific">Aeropyrum pernix (strain ATCC 700893 / DSM 11879 / JCM 9820 / NBRC 100138 / K1)</name>
    <dbReference type="NCBI Taxonomy" id="272557"/>
    <lineage>
        <taxon>Archaea</taxon>
        <taxon>Thermoproteota</taxon>
        <taxon>Thermoprotei</taxon>
        <taxon>Desulfurococcales</taxon>
        <taxon>Desulfurococcaceae</taxon>
        <taxon>Aeropyrum</taxon>
    </lineage>
</organism>
<reference key="1">
    <citation type="journal article" date="1999" name="DNA Res.">
        <title>Complete genome sequence of an aerobic hyper-thermophilic crenarchaeon, Aeropyrum pernix K1.</title>
        <authorList>
            <person name="Kawarabayasi Y."/>
            <person name="Hino Y."/>
            <person name="Horikawa H."/>
            <person name="Yamazaki S."/>
            <person name="Haikawa Y."/>
            <person name="Jin-no K."/>
            <person name="Takahashi M."/>
            <person name="Sekine M."/>
            <person name="Baba S."/>
            <person name="Ankai A."/>
            <person name="Kosugi H."/>
            <person name="Hosoyama A."/>
            <person name="Fukui S."/>
            <person name="Nagai Y."/>
            <person name="Nishijima K."/>
            <person name="Nakazawa H."/>
            <person name="Takamiya M."/>
            <person name="Masuda S."/>
            <person name="Funahashi T."/>
            <person name="Tanaka T."/>
            <person name="Kudoh Y."/>
            <person name="Yamazaki J."/>
            <person name="Kushida N."/>
            <person name="Oguchi A."/>
            <person name="Aoki K."/>
            <person name="Kubota K."/>
            <person name="Nakamura Y."/>
            <person name="Nomura N."/>
            <person name="Sako Y."/>
            <person name="Kikuchi H."/>
        </authorList>
    </citation>
    <scope>NUCLEOTIDE SEQUENCE [LARGE SCALE GENOMIC DNA]</scope>
    <source>
        <strain>ATCC 700893 / DSM 11879 / JCM 9820 / NBRC 100138 / K1</strain>
    </source>
</reference>
<accession>Q9YDM5</accession>
<gene>
    <name type="primary">mngA</name>
    <name type="ordered locus">APE_0889.1</name>
</gene>
<comment type="function">
    <text evidence="1">Transfers a mannosyl group from GDP-mannose to phosphoglycerate to form mannosyl-3-phosphoglycerate (MPG).</text>
</comment>
<comment type="catalytic activity">
    <reaction>
        <text>(2R)-3-phosphoglycerate + GDP-alpha-D-mannose = 2-O-(alpha-D-mannosyl)-3-phosphoglycerate + GDP + H(+)</text>
        <dbReference type="Rhea" id="RHEA:13537"/>
        <dbReference type="ChEBI" id="CHEBI:15378"/>
        <dbReference type="ChEBI" id="CHEBI:57527"/>
        <dbReference type="ChEBI" id="CHEBI:57744"/>
        <dbReference type="ChEBI" id="CHEBI:58189"/>
        <dbReference type="ChEBI" id="CHEBI:58272"/>
        <dbReference type="EC" id="2.4.1.217"/>
    </reaction>
</comment>
<comment type="pathway">
    <text>Carbohydrate biosynthesis; 2-(alpha-D-mannosyl)-D-glycerate biosynthesis; 2-(alpha-D-mannosyl)-D-glycerate from GDP-alpha-D-mannose (MPG route): step 1/2.</text>
</comment>
<comment type="subcellular location">
    <subcellularLocation>
        <location evidence="1">Cytoplasm</location>
    </subcellularLocation>
</comment>
<comment type="similarity">
    <text evidence="2">Belongs to the glycosyltransferase 2 family.</text>
</comment>